<accession>B5QTH9</accession>
<comment type="function">
    <text evidence="1">Involved in phosphonate degradation.</text>
</comment>
<comment type="catalytic activity">
    <reaction evidence="1">
        <text>(2-aminoethyl)phosphonate + pyruvate = phosphonoacetaldehyde + L-alanine</text>
        <dbReference type="Rhea" id="RHEA:17021"/>
        <dbReference type="ChEBI" id="CHEBI:15361"/>
        <dbReference type="ChEBI" id="CHEBI:57418"/>
        <dbReference type="ChEBI" id="CHEBI:57972"/>
        <dbReference type="ChEBI" id="CHEBI:58383"/>
        <dbReference type="EC" id="2.6.1.37"/>
    </reaction>
</comment>
<comment type="cofactor">
    <cofactor evidence="1">
        <name>pyridoxal 5'-phosphate</name>
        <dbReference type="ChEBI" id="CHEBI:597326"/>
    </cofactor>
</comment>
<comment type="subunit">
    <text evidence="1">Homodimer.</text>
</comment>
<comment type="similarity">
    <text evidence="1">Belongs to the class-V pyridoxal-phosphate-dependent aminotransferase family. PhnW subfamily.</text>
</comment>
<proteinExistence type="inferred from homology"/>
<sequence>MTSRNYLLLTPGPLTTSRTVKEAMLFDSCTWDDDYNIGVVEQIRQQLTELATASEGYTSVLLQGSGSYAVEAVLGSALGPQDKVLIVSNGAYGARMVEMAGLMGIAHHAYDCGEVARPDVQAIDAILNADPTISHIAMVHSETTTGMLNPIDEVGTLAHRYGKTYIVDAMSSFGGIPMDIAALHIDYLISSANKCIQGVPGFAFVIAREQKLAACKGRSRSLSLDLYAQWRCMEDNHGKWRFTSPTHTVLAFAQALKELAKEGGVAARHQRYQQNQRSLVAGMRALGFNTLLDDELHSPIITAFYSPEDPQYRFSEFYRRLKEQGFVIYPGKVSQSDCFRIGNIGEVYAADITALLTAIRTAMYWTK</sequence>
<protein>
    <recommendedName>
        <fullName evidence="1">2-aminoethylphosphonate--pyruvate transaminase</fullName>
        <ecNumber evidence="1">2.6.1.37</ecNumber>
    </recommendedName>
    <alternativeName>
        <fullName evidence="1">2-aminoethylphosphonate aminotransferase</fullName>
    </alternativeName>
    <alternativeName>
        <fullName evidence="1">AEP transaminase</fullName>
        <shortName evidence="1">AEPT</shortName>
    </alternativeName>
</protein>
<dbReference type="EC" id="2.6.1.37" evidence="1"/>
<dbReference type="EMBL" id="AM933172">
    <property type="protein sequence ID" value="CAR31999.1"/>
    <property type="molecule type" value="Genomic_DNA"/>
</dbReference>
<dbReference type="RefSeq" id="WP_000203973.1">
    <property type="nucleotide sequence ID" value="NC_011294.1"/>
</dbReference>
<dbReference type="SMR" id="B5QTH9"/>
<dbReference type="KEGG" id="set:SEN0413"/>
<dbReference type="HOGENOM" id="CLU_027686_3_1_6"/>
<dbReference type="Proteomes" id="UP000000613">
    <property type="component" value="Chromosome"/>
</dbReference>
<dbReference type="GO" id="GO:0047304">
    <property type="term" value="F:2-aminoethylphosphonate-pyruvate transaminase activity"/>
    <property type="evidence" value="ECO:0007669"/>
    <property type="project" value="UniProtKB-UniRule"/>
</dbReference>
<dbReference type="GO" id="GO:0019700">
    <property type="term" value="P:organic phosphonate catabolic process"/>
    <property type="evidence" value="ECO:0007669"/>
    <property type="project" value="InterPro"/>
</dbReference>
<dbReference type="Gene3D" id="3.90.1150.10">
    <property type="entry name" value="Aspartate Aminotransferase, domain 1"/>
    <property type="match status" value="1"/>
</dbReference>
<dbReference type="Gene3D" id="3.40.640.10">
    <property type="entry name" value="Type I PLP-dependent aspartate aminotransferase-like (Major domain)"/>
    <property type="match status" value="1"/>
</dbReference>
<dbReference type="HAMAP" id="MF_01376">
    <property type="entry name" value="PhnW_aminotrans_5"/>
    <property type="match status" value="1"/>
</dbReference>
<dbReference type="InterPro" id="IPR000192">
    <property type="entry name" value="Aminotrans_V_dom"/>
</dbReference>
<dbReference type="InterPro" id="IPR012703">
    <property type="entry name" value="NH2EtPonate_pyrv_transaminase"/>
</dbReference>
<dbReference type="InterPro" id="IPR015424">
    <property type="entry name" value="PyrdxlP-dep_Trfase"/>
</dbReference>
<dbReference type="InterPro" id="IPR015421">
    <property type="entry name" value="PyrdxlP-dep_Trfase_major"/>
</dbReference>
<dbReference type="InterPro" id="IPR015422">
    <property type="entry name" value="PyrdxlP-dep_Trfase_small"/>
</dbReference>
<dbReference type="InterPro" id="IPR024169">
    <property type="entry name" value="SP_NH2Trfase/AEP_transaminase"/>
</dbReference>
<dbReference type="NCBIfam" id="TIGR03301">
    <property type="entry name" value="PhnW-AepZ"/>
    <property type="match status" value="1"/>
</dbReference>
<dbReference type="NCBIfam" id="NF010006">
    <property type="entry name" value="PRK13479.1"/>
    <property type="match status" value="1"/>
</dbReference>
<dbReference type="NCBIfam" id="TIGR02326">
    <property type="entry name" value="transamin_PhnW"/>
    <property type="match status" value="1"/>
</dbReference>
<dbReference type="PANTHER" id="PTHR42778">
    <property type="entry name" value="2-AMINOETHYLPHOSPHONATE--PYRUVATE TRANSAMINASE"/>
    <property type="match status" value="1"/>
</dbReference>
<dbReference type="PANTHER" id="PTHR42778:SF1">
    <property type="entry name" value="2-AMINOETHYLPHOSPHONATE--PYRUVATE TRANSAMINASE"/>
    <property type="match status" value="1"/>
</dbReference>
<dbReference type="Pfam" id="PF00266">
    <property type="entry name" value="Aminotran_5"/>
    <property type="match status" value="1"/>
</dbReference>
<dbReference type="PIRSF" id="PIRSF000524">
    <property type="entry name" value="SPT"/>
    <property type="match status" value="1"/>
</dbReference>
<dbReference type="SUPFAM" id="SSF53383">
    <property type="entry name" value="PLP-dependent transferases"/>
    <property type="match status" value="1"/>
</dbReference>
<feature type="chain" id="PRO_1000144856" description="2-aminoethylphosphonate--pyruvate transaminase">
    <location>
        <begin position="1"/>
        <end position="367"/>
    </location>
</feature>
<feature type="modified residue" description="N6-(pyridoxal phosphate)lysine" evidence="1">
    <location>
        <position position="194"/>
    </location>
</feature>
<gene>
    <name evidence="1" type="primary">phnW</name>
    <name type="ordered locus">SEN0413</name>
</gene>
<organism>
    <name type="scientific">Salmonella enteritidis PT4 (strain P125109)</name>
    <dbReference type="NCBI Taxonomy" id="550537"/>
    <lineage>
        <taxon>Bacteria</taxon>
        <taxon>Pseudomonadati</taxon>
        <taxon>Pseudomonadota</taxon>
        <taxon>Gammaproteobacteria</taxon>
        <taxon>Enterobacterales</taxon>
        <taxon>Enterobacteriaceae</taxon>
        <taxon>Salmonella</taxon>
    </lineage>
</organism>
<name>PHNW_SALEP</name>
<reference key="1">
    <citation type="journal article" date="2008" name="Genome Res.">
        <title>Comparative genome analysis of Salmonella enteritidis PT4 and Salmonella gallinarum 287/91 provides insights into evolutionary and host adaptation pathways.</title>
        <authorList>
            <person name="Thomson N.R."/>
            <person name="Clayton D.J."/>
            <person name="Windhorst D."/>
            <person name="Vernikos G."/>
            <person name="Davidson S."/>
            <person name="Churcher C."/>
            <person name="Quail M.A."/>
            <person name="Stevens M."/>
            <person name="Jones M.A."/>
            <person name="Watson M."/>
            <person name="Barron A."/>
            <person name="Layton A."/>
            <person name="Pickard D."/>
            <person name="Kingsley R.A."/>
            <person name="Bignell A."/>
            <person name="Clark L."/>
            <person name="Harris B."/>
            <person name="Ormond D."/>
            <person name="Abdellah Z."/>
            <person name="Brooks K."/>
            <person name="Cherevach I."/>
            <person name="Chillingworth T."/>
            <person name="Woodward J."/>
            <person name="Norberczak H."/>
            <person name="Lord A."/>
            <person name="Arrowsmith C."/>
            <person name="Jagels K."/>
            <person name="Moule S."/>
            <person name="Mungall K."/>
            <person name="Saunders M."/>
            <person name="Whitehead S."/>
            <person name="Chabalgoity J.A."/>
            <person name="Maskell D."/>
            <person name="Humphreys T."/>
            <person name="Roberts M."/>
            <person name="Barrow P.A."/>
            <person name="Dougan G."/>
            <person name="Parkhill J."/>
        </authorList>
    </citation>
    <scope>NUCLEOTIDE SEQUENCE [LARGE SCALE GENOMIC DNA]</scope>
    <source>
        <strain>P125109</strain>
    </source>
</reference>
<evidence type="ECO:0000255" key="1">
    <source>
        <dbReference type="HAMAP-Rule" id="MF_01376"/>
    </source>
</evidence>
<keyword id="KW-0032">Aminotransferase</keyword>
<keyword id="KW-0663">Pyridoxal phosphate</keyword>
<keyword id="KW-0670">Pyruvate</keyword>
<keyword id="KW-0808">Transferase</keyword>